<keyword id="KW-0963">Cytoplasm</keyword>
<keyword id="KW-1185">Reference proteome</keyword>
<keyword id="KW-0690">Ribosome biogenesis</keyword>
<keyword id="KW-0694">RNA-binding</keyword>
<keyword id="KW-0699">rRNA-binding</keyword>
<accession>B8F3W5</accession>
<feature type="chain" id="PRO_1000148429" description="Dual-action ribosomal maturation protein DarP">
    <location>
        <begin position="1"/>
        <end position="177"/>
    </location>
</feature>
<reference key="1">
    <citation type="journal article" date="2009" name="J. Bacteriol.">
        <title>Complete genome sequence of Haemophilus parasuis SH0165.</title>
        <authorList>
            <person name="Yue M."/>
            <person name="Yang F."/>
            <person name="Yang J."/>
            <person name="Bei W."/>
            <person name="Cai X."/>
            <person name="Chen L."/>
            <person name="Dong J."/>
            <person name="Zhou R."/>
            <person name="Jin M."/>
            <person name="Jin Q."/>
            <person name="Chen H."/>
        </authorList>
    </citation>
    <scope>NUCLEOTIDE SEQUENCE [LARGE SCALE GENOMIC DNA]</scope>
    <source>
        <strain>SH0165</strain>
    </source>
</reference>
<proteinExistence type="inferred from homology"/>
<name>DARP_GLAP5</name>
<protein>
    <recommendedName>
        <fullName evidence="1">Dual-action ribosomal maturation protein DarP</fullName>
    </recommendedName>
    <alternativeName>
        <fullName evidence="1">Large ribosomal subunit assembly factor DarP</fullName>
    </alternativeName>
</protein>
<sequence length="177" mass="20916">MAKKQRNEIDWTDEEEEIIWVSKSEIKRDAEHLKKLGASLIELNSANLAKMPIDDTLREAIELAQRLRLEARRRQIQYIGKLLRNVDHEPIQEALDKVENRHNQQQALLHKLELIRDELIEQGDSAINPLVDEYPTLDRQHLRNLIRAAQKEKQANKPPKNYREIFQYLKSTIIEQN</sequence>
<evidence type="ECO:0000255" key="1">
    <source>
        <dbReference type="HAMAP-Rule" id="MF_00765"/>
    </source>
</evidence>
<dbReference type="EMBL" id="CP001321">
    <property type="protein sequence ID" value="ACL32017.1"/>
    <property type="molecule type" value="Genomic_DNA"/>
</dbReference>
<dbReference type="RefSeq" id="WP_012621675.1">
    <property type="nucleotide sequence ID" value="NC_011852.1"/>
</dbReference>
<dbReference type="SMR" id="B8F3W5"/>
<dbReference type="STRING" id="557723.HAPS_0332"/>
<dbReference type="KEGG" id="hap:HAPS_0332"/>
<dbReference type="PATRIC" id="fig|557723.8.peg.339"/>
<dbReference type="HOGENOM" id="CLU_106757_2_0_6"/>
<dbReference type="Proteomes" id="UP000006743">
    <property type="component" value="Chromosome"/>
</dbReference>
<dbReference type="GO" id="GO:0005829">
    <property type="term" value="C:cytosol"/>
    <property type="evidence" value="ECO:0007669"/>
    <property type="project" value="TreeGrafter"/>
</dbReference>
<dbReference type="GO" id="GO:0043022">
    <property type="term" value="F:ribosome binding"/>
    <property type="evidence" value="ECO:0007669"/>
    <property type="project" value="UniProtKB-UniRule"/>
</dbReference>
<dbReference type="GO" id="GO:0019843">
    <property type="term" value="F:rRNA binding"/>
    <property type="evidence" value="ECO:0007669"/>
    <property type="project" value="UniProtKB-UniRule"/>
</dbReference>
<dbReference type="GO" id="GO:1902626">
    <property type="term" value="P:assembly of large subunit precursor of preribosome"/>
    <property type="evidence" value="ECO:0007669"/>
    <property type="project" value="UniProtKB-UniRule"/>
</dbReference>
<dbReference type="CDD" id="cd16331">
    <property type="entry name" value="YjgA-like"/>
    <property type="match status" value="1"/>
</dbReference>
<dbReference type="FunFam" id="1.10.60.30:FF:000002">
    <property type="entry name" value="UPF0307 protein YjgA"/>
    <property type="match status" value="1"/>
</dbReference>
<dbReference type="Gene3D" id="1.10.60.30">
    <property type="entry name" value="PSPTO4464-like domains"/>
    <property type="match status" value="2"/>
</dbReference>
<dbReference type="HAMAP" id="MF_00765">
    <property type="entry name" value="DarP"/>
    <property type="match status" value="1"/>
</dbReference>
<dbReference type="InterPro" id="IPR006839">
    <property type="entry name" value="DarP"/>
</dbReference>
<dbReference type="InterPro" id="IPR023153">
    <property type="entry name" value="DarP_sf"/>
</dbReference>
<dbReference type="NCBIfam" id="NF003593">
    <property type="entry name" value="PRK05255.1-1"/>
    <property type="match status" value="1"/>
</dbReference>
<dbReference type="PANTHER" id="PTHR38101">
    <property type="entry name" value="UPF0307 PROTEIN YJGA"/>
    <property type="match status" value="1"/>
</dbReference>
<dbReference type="PANTHER" id="PTHR38101:SF1">
    <property type="entry name" value="UPF0307 PROTEIN YJGA"/>
    <property type="match status" value="1"/>
</dbReference>
<dbReference type="Pfam" id="PF04751">
    <property type="entry name" value="DarP"/>
    <property type="match status" value="1"/>
</dbReference>
<dbReference type="PIRSF" id="PIRSF016183">
    <property type="entry name" value="UCP016183"/>
    <property type="match status" value="1"/>
</dbReference>
<dbReference type="SUPFAM" id="SSF158710">
    <property type="entry name" value="PSPTO4464-like"/>
    <property type="match status" value="1"/>
</dbReference>
<organism>
    <name type="scientific">Glaesserella parasuis serovar 5 (strain SH0165)</name>
    <name type="common">Haemophilus parasuis</name>
    <dbReference type="NCBI Taxonomy" id="557723"/>
    <lineage>
        <taxon>Bacteria</taxon>
        <taxon>Pseudomonadati</taxon>
        <taxon>Pseudomonadota</taxon>
        <taxon>Gammaproteobacteria</taxon>
        <taxon>Pasteurellales</taxon>
        <taxon>Pasteurellaceae</taxon>
        <taxon>Glaesserella</taxon>
    </lineage>
</organism>
<gene>
    <name evidence="1" type="primary">darP</name>
    <name type="ordered locus">HAPS_0332</name>
</gene>
<comment type="function">
    <text evidence="1">Member of a network of 50S ribosomal subunit biogenesis factors which assembles along the 30S-50S interface, preventing incorrect 23S rRNA structures from forming. Promotes peptidyl transferase center (PTC) maturation.</text>
</comment>
<comment type="subcellular location">
    <subcellularLocation>
        <location evidence="1">Cytoplasm</location>
    </subcellularLocation>
    <text evidence="1">Associates with late stage pre-50S ribosomal subunits.</text>
</comment>
<comment type="similarity">
    <text evidence="1">Belongs to the DarP family.</text>
</comment>